<feature type="signal peptide" evidence="10">
    <location>
        <begin position="1"/>
        <end position="34"/>
    </location>
</feature>
<feature type="chain" id="PRO_0000032617" description="Cell surface glycoprotein">
    <location>
        <begin position="35"/>
        <end status="unknown"/>
    </location>
</feature>
<feature type="propeptide" id="PRO_0000444190" description="Removed by archaeosortase" evidence="16">
    <location>
        <begin status="unknown"/>
        <end position="827"/>
    </location>
</feature>
<feature type="transmembrane region" description="Helical" evidence="1">
    <location>
        <begin position="804"/>
        <end position="823"/>
    </location>
</feature>
<feature type="region of interest" description="Disordered" evidence="2">
    <location>
        <begin position="73"/>
        <end position="111"/>
    </location>
</feature>
<feature type="region of interest" description="Disordered" evidence="2">
    <location>
        <begin position="755"/>
        <end position="804"/>
    </location>
</feature>
<feature type="short sequence motif" description="PGF sorting signal" evidence="16">
    <location>
        <begin position="804"/>
        <end position="806"/>
    </location>
</feature>
<feature type="compositionally biased region" description="Polar residues" evidence="2">
    <location>
        <begin position="73"/>
        <end position="102"/>
    </location>
</feature>
<feature type="compositionally biased region" description="Low complexity" evidence="2">
    <location>
        <begin position="761"/>
        <end position="787"/>
    </location>
</feature>
<feature type="site" description="Not glycosylated" evidence="11">
    <location>
        <position position="404"/>
    </location>
</feature>
<feature type="glycosylation site" description="N-linked (Glc...) asparagine" evidence="4 6 7 8 10">
    <location>
        <position position="47"/>
    </location>
</feature>
<feature type="glycosylation site" description="N-linked (Glc...) asparagine" evidence="6 7">
    <location>
        <position position="117"/>
    </location>
</feature>
<feature type="glycosylation site" description="N-linked (Glc...) asparagine" evidence="4 10">
    <location>
        <position position="308"/>
    </location>
</feature>
<feature type="glycosylation site" description="N-linked (Glc...) asparagine" evidence="4 10">
    <location>
        <position position="313"/>
    </location>
</feature>
<feature type="glycosylation site" description="N-linked (Glc...) asparagine" evidence="4 11 13">
    <location>
        <position position="532"/>
    </location>
</feature>
<feature type="glycosylation site" description="N-linked (Glc...) asparagine" evidence="1">
    <location>
        <position position="766"/>
    </location>
</feature>
<feature type="mutagenesis site" description="Loss of ArtA-dependent C-terminal processing. Lack of lipid modification. Forms a thicker S-layer." evidence="14">
    <original>GF</original>
    <variation>FG</variation>
    <location>
        <begin position="805"/>
        <end position="806"/>
    </location>
</feature>
<feature type="sequence conflict" description="In Ref. 3; AA sequence." evidence="15" ref="3">
    <original>T</original>
    <variation>TA</variation>
    <location>
        <position position="534"/>
    </location>
</feature>
<feature type="helix" evidence="17">
    <location>
        <begin position="39"/>
        <end position="41"/>
    </location>
</feature>
<feature type="strand" evidence="17">
    <location>
        <begin position="64"/>
        <end position="66"/>
    </location>
</feature>
<feature type="helix" evidence="17">
    <location>
        <begin position="68"/>
        <end position="71"/>
    </location>
</feature>
<feature type="strand" evidence="17">
    <location>
        <begin position="74"/>
        <end position="77"/>
    </location>
</feature>
<feature type="helix" evidence="17">
    <location>
        <begin position="80"/>
        <end position="82"/>
    </location>
</feature>
<feature type="strand" evidence="17">
    <location>
        <begin position="86"/>
        <end position="88"/>
    </location>
</feature>
<feature type="turn" evidence="17">
    <location>
        <begin position="97"/>
        <end position="99"/>
    </location>
</feature>
<feature type="strand" evidence="17">
    <location>
        <begin position="102"/>
        <end position="108"/>
    </location>
</feature>
<feature type="strand" evidence="17">
    <location>
        <begin position="118"/>
        <end position="121"/>
    </location>
</feature>
<feature type="strand" evidence="17">
    <location>
        <begin position="125"/>
        <end position="131"/>
    </location>
</feature>
<feature type="strand" evidence="17">
    <location>
        <begin position="141"/>
        <end position="144"/>
    </location>
</feature>
<feature type="helix" evidence="17">
    <location>
        <begin position="146"/>
        <end position="148"/>
    </location>
</feature>
<feature type="strand" evidence="17">
    <location>
        <begin position="151"/>
        <end position="158"/>
    </location>
</feature>
<feature type="turn" evidence="17">
    <location>
        <begin position="160"/>
        <end position="162"/>
    </location>
</feature>
<feature type="strand" evidence="17">
    <location>
        <begin position="165"/>
        <end position="170"/>
    </location>
</feature>
<feature type="helix" evidence="17">
    <location>
        <begin position="178"/>
        <end position="181"/>
    </location>
</feature>
<feature type="strand" evidence="17">
    <location>
        <begin position="187"/>
        <end position="189"/>
    </location>
</feature>
<feature type="strand" evidence="17">
    <location>
        <begin position="201"/>
        <end position="206"/>
    </location>
</feature>
<feature type="strand" evidence="17">
    <location>
        <begin position="209"/>
        <end position="211"/>
    </location>
</feature>
<feature type="strand" evidence="17">
    <location>
        <begin position="213"/>
        <end position="225"/>
    </location>
</feature>
<feature type="helix" evidence="17">
    <location>
        <begin position="229"/>
        <end position="231"/>
    </location>
</feature>
<feature type="strand" evidence="17">
    <location>
        <begin position="233"/>
        <end position="240"/>
    </location>
</feature>
<feature type="strand" evidence="17">
    <location>
        <begin position="246"/>
        <end position="250"/>
    </location>
</feature>
<feature type="strand" evidence="17">
    <location>
        <begin position="252"/>
        <end position="255"/>
    </location>
</feature>
<feature type="strand" evidence="17">
    <location>
        <begin position="260"/>
        <end position="266"/>
    </location>
</feature>
<feature type="strand" evidence="17">
    <location>
        <begin position="271"/>
        <end position="278"/>
    </location>
</feature>
<feature type="helix" evidence="17">
    <location>
        <begin position="288"/>
        <end position="291"/>
    </location>
</feature>
<feature type="strand" evidence="17">
    <location>
        <begin position="301"/>
        <end position="307"/>
    </location>
</feature>
<feature type="strand" evidence="17">
    <location>
        <begin position="312"/>
        <end position="314"/>
    </location>
</feature>
<feature type="strand" evidence="17">
    <location>
        <begin position="318"/>
        <end position="320"/>
    </location>
</feature>
<feature type="turn" evidence="17">
    <location>
        <begin position="323"/>
        <end position="325"/>
    </location>
</feature>
<feature type="strand" evidence="17">
    <location>
        <begin position="328"/>
        <end position="336"/>
    </location>
</feature>
<feature type="strand" evidence="17">
    <location>
        <begin position="339"/>
        <end position="344"/>
    </location>
</feature>
<feature type="strand" evidence="17">
    <location>
        <begin position="351"/>
        <end position="358"/>
    </location>
</feature>
<feature type="helix" evidence="17">
    <location>
        <begin position="367"/>
        <end position="369"/>
    </location>
</feature>
<feature type="strand" evidence="17">
    <location>
        <begin position="374"/>
        <end position="382"/>
    </location>
</feature>
<feature type="strand" evidence="17">
    <location>
        <begin position="393"/>
        <end position="396"/>
    </location>
</feature>
<feature type="strand" evidence="17">
    <location>
        <begin position="400"/>
        <end position="406"/>
    </location>
</feature>
<feature type="strand" evidence="17">
    <location>
        <begin position="411"/>
        <end position="421"/>
    </location>
</feature>
<feature type="strand" evidence="17">
    <location>
        <begin position="423"/>
        <end position="425"/>
    </location>
</feature>
<feature type="strand" evidence="17">
    <location>
        <begin position="429"/>
        <end position="432"/>
    </location>
</feature>
<feature type="strand" evidence="17">
    <location>
        <begin position="440"/>
        <end position="448"/>
    </location>
</feature>
<feature type="helix" evidence="17">
    <location>
        <begin position="449"/>
        <end position="451"/>
    </location>
</feature>
<feature type="strand" evidence="17">
    <location>
        <begin position="452"/>
        <end position="454"/>
    </location>
</feature>
<feature type="helix" evidence="17">
    <location>
        <begin position="455"/>
        <end position="460"/>
    </location>
</feature>
<feature type="strand" evidence="17">
    <location>
        <begin position="462"/>
        <end position="472"/>
    </location>
</feature>
<feature type="helix" evidence="17">
    <location>
        <begin position="473"/>
        <end position="476"/>
    </location>
</feature>
<feature type="strand" evidence="17">
    <location>
        <begin position="478"/>
        <end position="480"/>
    </location>
</feature>
<feature type="strand" evidence="17">
    <location>
        <begin position="486"/>
        <end position="488"/>
    </location>
</feature>
<feature type="helix" evidence="17">
    <location>
        <begin position="490"/>
        <end position="495"/>
    </location>
</feature>
<feature type="strand" evidence="17">
    <location>
        <begin position="496"/>
        <end position="506"/>
    </location>
</feature>
<feature type="strand" evidence="17">
    <location>
        <begin position="517"/>
        <end position="520"/>
    </location>
</feature>
<feature type="helix" evidence="17">
    <location>
        <begin position="524"/>
        <end position="526"/>
    </location>
</feature>
<feature type="strand" evidence="17">
    <location>
        <begin position="527"/>
        <end position="534"/>
    </location>
</feature>
<feature type="strand" evidence="17">
    <location>
        <begin position="539"/>
        <end position="547"/>
    </location>
</feature>
<feature type="strand" evidence="17">
    <location>
        <begin position="552"/>
        <end position="558"/>
    </location>
</feature>
<feature type="strand" evidence="17">
    <location>
        <begin position="563"/>
        <end position="572"/>
    </location>
</feature>
<feature type="strand" evidence="17">
    <location>
        <begin position="576"/>
        <end position="585"/>
    </location>
</feature>
<feature type="strand" evidence="17">
    <location>
        <begin position="598"/>
        <end position="600"/>
    </location>
</feature>
<feature type="strand" evidence="17">
    <location>
        <begin position="602"/>
        <end position="604"/>
    </location>
</feature>
<feature type="helix" evidence="17">
    <location>
        <begin position="607"/>
        <end position="617"/>
    </location>
</feature>
<feature type="helix" evidence="17">
    <location>
        <begin position="624"/>
        <end position="635"/>
    </location>
</feature>
<feature type="helix" evidence="17">
    <location>
        <begin position="638"/>
        <end position="640"/>
    </location>
</feature>
<feature type="strand" evidence="17">
    <location>
        <begin position="644"/>
        <end position="651"/>
    </location>
</feature>
<feature type="strand" evidence="17">
    <location>
        <begin position="657"/>
        <end position="667"/>
    </location>
</feature>
<feature type="strand" evidence="17">
    <location>
        <begin position="670"/>
        <end position="672"/>
    </location>
</feature>
<feature type="strand" evidence="17">
    <location>
        <begin position="679"/>
        <end position="687"/>
    </location>
</feature>
<feature type="turn" evidence="17">
    <location>
        <begin position="691"/>
        <end position="693"/>
    </location>
</feature>
<feature type="strand" evidence="17">
    <location>
        <begin position="696"/>
        <end position="701"/>
    </location>
</feature>
<feature type="strand" evidence="17">
    <location>
        <begin position="707"/>
        <end position="713"/>
    </location>
</feature>
<feature type="strand" evidence="17">
    <location>
        <begin position="721"/>
        <end position="727"/>
    </location>
</feature>
<feature type="strand" evidence="17">
    <location>
        <begin position="733"/>
        <end position="741"/>
    </location>
</feature>
<feature type="strand" evidence="17">
    <location>
        <begin position="746"/>
        <end position="755"/>
    </location>
</feature>
<name>CSG_HALVD</name>
<reference key="1">
    <citation type="journal article" date="1990" name="J. Bacteriol.">
        <title>Primary structure and glycosylation of the S-layer protein of Haloferax volcanii.</title>
        <authorList>
            <person name="Sumper M."/>
            <person name="Berg E."/>
            <person name="Mengele R."/>
            <person name="Strobel I."/>
        </authorList>
    </citation>
    <scope>NUCLEOTIDE SEQUENCE [GENOMIC DNA]</scope>
    <scope>PROTEIN SEQUENCE OF 35-51; 153-164; 278-292; 297-330; 348-360; 461-467; 494-504; 652-679 AND 737-757</scope>
    <scope>GLYCOSYLATION AT ASN-47; ASN-308 AND ASN-313</scope>
    <scope>FUNCTION</scope>
    <scope>SUBCELLULAR LOCATION</scope>
    <source>
        <strain>ATCC 29605 / DSM 3757 / JCM 8879 / NBRC 14742 / NCIMB 2012 / VKM B-1768 / DS2</strain>
    </source>
</reference>
<reference key="2">
    <citation type="journal article" date="2010" name="PLoS ONE">
        <title>The complete genome sequence of Haloferax volcanii DS2, a model archaeon.</title>
        <authorList>
            <person name="Hartman A.L."/>
            <person name="Norais C."/>
            <person name="Badger J.H."/>
            <person name="Delmas S."/>
            <person name="Haldenby S."/>
            <person name="Madupu R."/>
            <person name="Robinson J."/>
            <person name="Khouri H."/>
            <person name="Ren Q."/>
            <person name="Lowe T.M."/>
            <person name="Maupin-Furlow J."/>
            <person name="Pohlschroder M."/>
            <person name="Daniels C."/>
            <person name="Pfeiffer F."/>
            <person name="Allers T."/>
            <person name="Eisen J.A."/>
        </authorList>
    </citation>
    <scope>NUCLEOTIDE SEQUENCE [LARGE SCALE GENOMIC DNA]</scope>
    <source>
        <strain>ATCC 29605 / DSM 3757 / JCM 8879 / NBRC 14742 / NCIMB 2012 / VKM B-1768 / DS2</strain>
    </source>
</reference>
<reference key="3">
    <citation type="journal article" date="1992" name="J. Biol. Chem.">
        <title>Drastic differences in glycosylation of related S-layer glycoproteins from moderate and extreme halophiles.</title>
        <authorList>
            <person name="Mengele R."/>
            <person name="Sumper M."/>
        </authorList>
    </citation>
    <scope>PROTEIN SEQUENCE OF 37-48; 297-326 AND 505-549</scope>
    <scope>GLYCOSYLATION AT ASN-47; ASN-308; ASN-313 AND ASN-532</scope>
    <scope>GLYCAN COMPOSITION</scope>
    <scope>SUBCELLULAR LOCATION</scope>
    <source>
        <strain>ATCC 29605 / DSM 3757 / JCM 8879 / NBRC 14742 / NCIMB 2012 / VKM B-1768 / DS2</strain>
    </source>
</reference>
<reference key="4">
    <citation type="journal article" date="1988" name="EMBO J.">
        <title>Three-dimensional structure of the regular surface glycoprotein layer of Halobacterium volcanii from the Dead Sea.</title>
        <authorList>
            <person name="Kessel M."/>
            <person name="Wildhaber I."/>
            <person name="Cohen S."/>
            <person name="Baumeister W."/>
        </authorList>
    </citation>
    <scope>FUNCTION</scope>
    <scope>STRUCTURE BY ELECTRON MICROSCOPY</scope>
</reference>
<reference key="5">
    <citation type="journal article" date="2002" name="Biochem. J.">
        <title>Lipid modification of proteins in Archaea: attachment of a mevalonic acid-based lipid moiety to the surface-layer glycoprotein of Haloferax volcanii follows protein translocation.</title>
        <authorList>
            <person name="Konrad Z."/>
            <person name="Eichler J."/>
        </authorList>
    </citation>
    <scope>LIPIDATION</scope>
</reference>
<reference key="6">
    <citation type="journal article" date="2007" name="J. Mol. Biol.">
        <title>Haloferax volcanii AglB and AglD are involved in N-glycosylation of the S-layer glycoprotein and proper assembly of the surface layer.</title>
        <authorList>
            <person name="Abu-Qarn M."/>
            <person name="Yurist-Doutsch S."/>
            <person name="Giordana A."/>
            <person name="Trauner A."/>
            <person name="Morris H.R."/>
            <person name="Hitchen P."/>
            <person name="Medalia O."/>
            <person name="Dell A."/>
            <person name="Eichler J."/>
        </authorList>
    </citation>
    <scope>GLYCOSYLATION AT ASN-47 AND ASN-117</scope>
</reference>
<reference key="7">
    <citation type="journal article" date="2010" name="J. Bacteriol.">
        <title>AglJ adds the first sugar of the N-linked pentasaccharide decorating the Haloferax volcanii S-layer glycoprotein.</title>
        <authorList>
            <person name="Kaminski L."/>
            <person name="Abu-Qarn M."/>
            <person name="Guan Z."/>
            <person name="Naparstek S."/>
            <person name="Ventura V.V."/>
            <person name="Raetz C.R."/>
            <person name="Hitchen P.G."/>
            <person name="Dell A."/>
            <person name="Eichler J."/>
        </authorList>
    </citation>
    <scope>GLYCOSYLATION AT ASN-47</scope>
</reference>
<reference key="8">
    <citation type="journal article" date="2010" name="Mol. Microbiol.">
        <title>AglP is a S-adenosyl-L-methionine-dependent methyltransferase that participates in the N-glycosylation pathway of Haloferax volcanii.</title>
        <authorList>
            <person name="Magidovich H."/>
            <person name="Yurist-Doutsch S."/>
            <person name="Konrad Z."/>
            <person name="Ventura V.V."/>
            <person name="Dell A."/>
            <person name="Hitchen P.G."/>
            <person name="Eichler J."/>
        </authorList>
    </citation>
    <scope>GLYCOSYLATION AT ASN-47 AND ASN-117</scope>
</reference>
<reference key="9">
    <citation type="journal article" date="2010" name="Mol. Microbiol.">
        <title>Distinct glycan-charged phosphodolichol carriers are required for the assembly of the pentasaccharide N-linked to the Haloferax volcanii S-layer glycoprotein.</title>
        <authorList>
            <person name="Guan Z."/>
            <person name="Naparstek S."/>
            <person name="Kaminski L."/>
            <person name="Konrad Z."/>
            <person name="Eichler J."/>
        </authorList>
    </citation>
    <scope>GLYCOSYLATION</scope>
</reference>
<reference key="10">
    <citation type="journal article" date="2012" name="Environ. Microbiol.">
        <title>Protein glycosylation as an adaptive response in Archaea: growth at different salt concentrations leads to alterations in Haloferax volcanii S-layer glycoprotein N-glycosylation.</title>
        <authorList>
            <person name="Guan Z."/>
            <person name="Naparstek S."/>
            <person name="Calo D."/>
            <person name="Eichler J."/>
        </authorList>
    </citation>
    <scope>GLYCOSYLATION AT ASN-532</scope>
    <scope>LACK OF GLYCOSYLATION AT ASN-404</scope>
</reference>
<reference key="11">
    <citation type="journal article" date="2013" name="MBio">
        <title>Two distinct N-glycosylation pathways process the Haloferax volcanii S-layer glycoprotein upon changes in environmental salinity.</title>
        <authorList>
            <person name="Kaminski L."/>
            <person name="Guan Z."/>
            <person name="Yurist-Doutsch S."/>
            <person name="Eichler J."/>
        </authorList>
    </citation>
    <scope>GLYCOSYLATION AT ASN-532</scope>
    <source>
        <strain>ATCC 29605 / DSM 3757 / JCM 8879 / NBRC 14742 / NCIMB 2012 / VKM B-1768 / DS2</strain>
    </source>
</reference>
<reference key="12">
    <citation type="journal article" date="2013" name="Mol. Microbiol.">
        <title>Haloferax volcanii archaeosortase is required for motility, mating, and C-terminal processing of the S-layer glycoprotein.</title>
        <authorList>
            <person name="Abdul Halim M.F."/>
            <person name="Pfeiffer F."/>
            <person name="Zou J."/>
            <person name="Frisch A."/>
            <person name="Haft D."/>
            <person name="Wu S."/>
            <person name="Tolic N."/>
            <person name="Brewer H."/>
            <person name="Payne S.H."/>
            <person name="Pasa-Tolic L."/>
            <person name="Pohlschroder M."/>
        </authorList>
    </citation>
    <scope>PROTEOLYTIC PROCESSING</scope>
</reference>
<reference key="13">
    <citation type="journal article" date="2015" name="J. Bacteriol.">
        <title>Permuting the PGF signature motif blocks both archaeosortase-dependent C-terminal cleavage and prenyl lipid attachment for the Haloferax volcanii S-layer glycoprotein.</title>
        <authorList>
            <person name="Abdul Halim M.F."/>
            <person name="Karch K.R."/>
            <person name="Zhou Y."/>
            <person name="Haft D.H."/>
            <person name="Garcia B.A."/>
            <person name="Pohlschroder M."/>
        </authorList>
    </citation>
    <scope>SUBCELLULAR LOCATION</scope>
    <scope>PROTEOLYTIC PROCESSING</scope>
    <scope>LIPIDATION</scope>
    <scope>MUTAGENESIS OF 805-GLY-PHE-806</scope>
</reference>
<proteinExistence type="evidence at protein level"/>
<organism>
    <name type="scientific">Haloferax volcanii (strain ATCC 29605 / DSM 3757 / JCM 8879 / NBRC 14742 / NCIMB 2012 / VKM B-1768 / DS2)</name>
    <name type="common">Halobacterium volcanii</name>
    <dbReference type="NCBI Taxonomy" id="309800"/>
    <lineage>
        <taxon>Archaea</taxon>
        <taxon>Methanobacteriati</taxon>
        <taxon>Methanobacteriota</taxon>
        <taxon>Stenosarchaea group</taxon>
        <taxon>Halobacteria</taxon>
        <taxon>Halobacteriales</taxon>
        <taxon>Haloferacaceae</taxon>
        <taxon>Haloferax</taxon>
    </lineage>
</organism>
<sequence length="827" mass="85189">MTKLKDQTRAILLATLMVTSVFAGAIAFTGSAAAERGNLDADSESFNKTIQSGDRVFLGEEISTDAGLGASNPLLTGTAGNSEGVSLDLSSPIPQTTENQPLGTYDVDGSGSATTPNVTLLAPRITDSEILTSSGGDVTGSAISSSDAGNLYVNADYNYESAEKVEVTVEDPSGTDITNEVLSGTDTFVDDGSIGSTSSTGGGVGIDMSDQDAGEYTIILEGAEDLDFGDATETMTLTISSQDEIGIELDSESVTQGTDVQYTVTNGIDGNEHVVAMDLSDLQNDATTEQAKEVFRNIGDTSEVGIANSSATNTSGSSTGPTVETADIAYAVVEIDGASAVGGIETQYLDDSEVDLEVYDAGVSATAAVGQDATNDITLTIEEGGTTLSSPTGQYVVGSEVDINGTATSSDSVAIYVRDDGDWQLLEIGGDNEISVDSDDTFEEEDIALSGLSGDGSSILSLTGTYRIGVIDASDADVGGDGSVDDSLTTSEFTSGVSSSNSIRVTDQALTGQFTTINGQVAPVETGTVDINGTASGANSVLVIFVDERGNVNYQEVSVDSDGTYDEDDITVGLTQGRVTAHILSVGRDSAIGDGSLPSGPSNGATLNDLTGYLDTLDQNNNNGEQINELIASETVDETASDDLIVTETFRLAESSTSIDSIYPDAAEAAGINPVATGETMVIAGSTNLKPDDNTISIEVTNEDGTSVALEDTDEWNNDGQWMVEIDTTDFETGTFTVEADDGDNTDTVNVEVVSEREDTTTSSDNATDTTTTTDGPTETTTTAEPTETTEEPTEETTTSSNTPGFGIAVALVALVGAALLALRREN</sequence>
<keyword id="KW-0002">3D-structure</keyword>
<keyword id="KW-1003">Cell membrane</keyword>
<keyword id="KW-0134">Cell wall</keyword>
<keyword id="KW-0961">Cell wall biogenesis/degradation</keyword>
<keyword id="KW-0903">Direct protein sequencing</keyword>
<keyword id="KW-0325">Glycoprotein</keyword>
<keyword id="KW-0449">Lipoprotein</keyword>
<keyword id="KW-0472">Membrane</keyword>
<keyword id="KW-1185">Reference proteome</keyword>
<keyword id="KW-0701">S-layer</keyword>
<keyword id="KW-0964">Secreted</keyword>
<keyword id="KW-0732">Signal</keyword>
<keyword id="KW-0812">Transmembrane</keyword>
<keyword id="KW-1133">Transmembrane helix</keyword>
<dbReference type="EMBL" id="M62816">
    <property type="protein sequence ID" value="AAA72996.1"/>
    <property type="molecule type" value="Genomic_DNA"/>
</dbReference>
<dbReference type="EMBL" id="CP001956">
    <property type="protein sequence ID" value="ADE05144.1"/>
    <property type="molecule type" value="Genomic_DNA"/>
</dbReference>
<dbReference type="PIR" id="A37849">
    <property type="entry name" value="A37849"/>
</dbReference>
<dbReference type="PIR" id="A38085">
    <property type="entry name" value="A38085"/>
</dbReference>
<dbReference type="RefSeq" id="WP_013035656.1">
    <property type="nucleotide sequence ID" value="NC_013967.1"/>
</dbReference>
<dbReference type="PDB" id="7PTP">
    <property type="method" value="EM"/>
    <property type="resolution" value="11.58 A"/>
    <property type="chains" value="A/B/C/D/E=35-827"/>
</dbReference>
<dbReference type="PDB" id="7PTR">
    <property type="method" value="EM"/>
    <property type="resolution" value="3.46 A"/>
    <property type="chains" value="A/B/C/D/E/F=35-827"/>
</dbReference>
<dbReference type="PDB" id="7PTT">
    <property type="method" value="EM"/>
    <property type="resolution" value="7.97 A"/>
    <property type="chains" value="A/B/C/D/E/F=35-827"/>
</dbReference>
<dbReference type="PDB" id="7PTU">
    <property type="method" value="EM"/>
    <property type="resolution" value="3.87 A"/>
    <property type="chains" value="A/B/C/D/E=35-827"/>
</dbReference>
<dbReference type="PDBsum" id="7PTP"/>
<dbReference type="PDBsum" id="7PTR"/>
<dbReference type="PDBsum" id="7PTT"/>
<dbReference type="PDBsum" id="7PTU"/>
<dbReference type="EMDB" id="EMD-13632"/>
<dbReference type="EMDB" id="EMD-13634"/>
<dbReference type="EMDB" id="EMD-13637"/>
<dbReference type="EMDB" id="EMD-13638"/>
<dbReference type="EMDB" id="EMD-13639"/>
<dbReference type="SMR" id="P25062"/>
<dbReference type="STRING" id="309800.HVO_2072"/>
<dbReference type="TCDB" id="9.B.324.4.1">
    <property type="family name" value="the pore-forming s-layer protein (s-layer) family"/>
</dbReference>
<dbReference type="GlyConnect" id="81">
    <property type="glycosylation" value="1 N-Linked glycan, 1 O-Linked glycan"/>
</dbReference>
<dbReference type="GlyCosmos" id="P25062">
    <property type="glycosylation" value="6 sites, 4 glycans"/>
</dbReference>
<dbReference type="iPTMnet" id="P25062"/>
<dbReference type="PaxDb" id="309800-C498_05653"/>
<dbReference type="EnsemblBacteria" id="ADE05144">
    <property type="protein sequence ID" value="ADE05144"/>
    <property type="gene ID" value="HVO_2072"/>
</dbReference>
<dbReference type="GeneID" id="8924493"/>
<dbReference type="KEGG" id="hvo:HVO_2072"/>
<dbReference type="eggNOG" id="arCOG03906">
    <property type="taxonomic scope" value="Archaea"/>
</dbReference>
<dbReference type="HOGENOM" id="CLU_015552_0_0_2"/>
<dbReference type="OrthoDB" id="242828at2157"/>
<dbReference type="Proteomes" id="UP000008243">
    <property type="component" value="Chromosome"/>
</dbReference>
<dbReference type="GO" id="GO:0005576">
    <property type="term" value="C:extracellular region"/>
    <property type="evidence" value="ECO:0007669"/>
    <property type="project" value="UniProtKB-KW"/>
</dbReference>
<dbReference type="GO" id="GO:0005886">
    <property type="term" value="C:plasma membrane"/>
    <property type="evidence" value="ECO:0007669"/>
    <property type="project" value="UniProtKB-SubCell"/>
</dbReference>
<dbReference type="GO" id="GO:0030115">
    <property type="term" value="C:S-layer"/>
    <property type="evidence" value="ECO:0007669"/>
    <property type="project" value="UniProtKB-SubCell"/>
</dbReference>
<dbReference type="GO" id="GO:0071555">
    <property type="term" value="P:cell wall organization"/>
    <property type="evidence" value="ECO:0007669"/>
    <property type="project" value="UniProtKB-KW"/>
</dbReference>
<dbReference type="InterPro" id="IPR026458">
    <property type="entry name" value="Csg_halobact"/>
</dbReference>
<dbReference type="InterPro" id="IPR026371">
    <property type="entry name" value="PGF_CTERM"/>
</dbReference>
<dbReference type="InterPro" id="IPR026452">
    <property type="entry name" value="Surf_glycop_sig_pep"/>
</dbReference>
<dbReference type="NCBIfam" id="TIGR04207">
    <property type="entry name" value="halo_sig_pep"/>
    <property type="match status" value="1"/>
</dbReference>
<dbReference type="NCBIfam" id="TIGR04216">
    <property type="entry name" value="halo_surf_glyco"/>
    <property type="match status" value="1"/>
</dbReference>
<dbReference type="NCBIfam" id="TIGR04126">
    <property type="entry name" value="PGF_CTERM"/>
    <property type="match status" value="1"/>
</dbReference>
<dbReference type="Pfam" id="PF18204">
    <property type="entry name" value="PGF-CTERM"/>
    <property type="match status" value="1"/>
</dbReference>
<gene>
    <name type="primary">csg</name>
    <name type="synonym">cwd</name>
    <name type="ordered locus">HVO_2072</name>
</gene>
<comment type="function">
    <text evidence="5 10">S-layer protein. The S-layer is a paracrystalline mono-layered assembly of proteins which coat the surface of the cell.</text>
</comment>
<comment type="subcellular location">
    <subcellularLocation>
        <location evidence="4 10">Secreted</location>
        <location evidence="4 10">Cell wall</location>
        <location evidence="4 10">S-layer</location>
    </subcellularLocation>
    <subcellularLocation>
        <location evidence="4 10">Cell membrane</location>
    </subcellularLocation>
    <text evidence="4 10 14">This archaeon is covered by an S-layer with hexagonal symmetry. S-layer glycoproteins are anchored to the plasma membrane as well as being surface-exposed (PubMed:1569073, PubMed:2123862). Bound to the membrane via a covalent lipid-mediated ArtA-dependent anchoring mechanism (PubMed:26712937).</text>
</comment>
<comment type="domain">
    <text evidence="5">The glycoprotein is arranged on a p6 lattice with a lattice constant of 16.8 nm. It forms 4.5 nm high, dome-shaped, morphological complexes with a narrow pore at the apex opening into a 'funnel' towards the cell membrane (PubMed:16453843).</text>
</comment>
<comment type="PTM">
    <text evidence="10">O-glycosylated on 4 to 6 threonine residues; glycans consist of Glc-Gal disaccharides.</text>
</comment>
<comment type="PTM">
    <text>The N-terminus is not blocked.</text>
</comment>
<comment type="PTM">
    <text evidence="12 14">Cleaved by the archaeosortase ArtA at the C-terminus, with removal of a short hydrophobic segment.</text>
</comment>
<comment type="PTM">
    <text evidence="3 14">Lipidation: Following protein translocation across the membrane, the protein is modified by a derivative of mevalonic acid (PubMed:12069685, PubMed:26712937). Lipid modification is ArtA-dependent and requires the conserved C-terminal PGF motif (PubMed:26712937).</text>
</comment>
<comment type="PTM">
    <text evidence="4 6 7 8 9 10 11 13">Asn-47 and Asn-117 are glycosylated by a pentasaccharide comprising a hexose, 2 hexuronic acids, a methyl ester of a hexuronic acid and mannose (PubMed:17996897, PubMed:20149102, PubMed:20802039). The pentasaccharide is produced in 2 steps: first, a tetrasaccharide is built on dolichol-P and then transferred to the S-layer glycoprotein. Then, the mannose fifth sugar is attached to a distinct molecule of dolichol-P and is transferred to the protein already carrying the tetrasaccharide (PubMed:21091511). The pentasaccharide on Asn-47 was initially thought to contain mannose, galactose, glucose and idose with a relative ratio of 1/3/3/0.2 (PubMed:1569073). However, it was later shown that it is not the case (PubMed:17996897). Under low-salt conditions (1.75 M instead of 3.4 M), a tetrasaccharide consisting of a sulfated hexose, 2 hexoses and rhamnose is attached to Asn-532 (PubMed:22029420).</text>
</comment>
<comment type="similarity">
    <text evidence="15">Belongs to the halobacterial S-layer protein family.</text>
</comment>
<accession>P25062</accession>
<accession>D4GU85</accession>
<accession>Q7M554</accession>
<protein>
    <recommendedName>
        <fullName>Cell surface glycoprotein</fullName>
    </recommendedName>
    <alternativeName>
        <fullName>S-layer glycoprotein</fullName>
    </alternativeName>
</protein>
<evidence type="ECO:0000255" key="1"/>
<evidence type="ECO:0000256" key="2">
    <source>
        <dbReference type="SAM" id="MobiDB-lite"/>
    </source>
</evidence>
<evidence type="ECO:0000269" key="3">
    <source>
    </source>
</evidence>
<evidence type="ECO:0000269" key="4">
    <source>
    </source>
</evidence>
<evidence type="ECO:0000269" key="5">
    <source>
    </source>
</evidence>
<evidence type="ECO:0000269" key="6">
    <source>
    </source>
</evidence>
<evidence type="ECO:0000269" key="7">
    <source>
    </source>
</evidence>
<evidence type="ECO:0000269" key="8">
    <source>
    </source>
</evidence>
<evidence type="ECO:0000269" key="9">
    <source>
    </source>
</evidence>
<evidence type="ECO:0000269" key="10">
    <source>
    </source>
</evidence>
<evidence type="ECO:0000269" key="11">
    <source>
    </source>
</evidence>
<evidence type="ECO:0000269" key="12">
    <source>
    </source>
</evidence>
<evidence type="ECO:0000269" key="13">
    <source>
    </source>
</evidence>
<evidence type="ECO:0000269" key="14">
    <source>
    </source>
</evidence>
<evidence type="ECO:0000305" key="15"/>
<evidence type="ECO:0000305" key="16">
    <source>
    </source>
</evidence>
<evidence type="ECO:0007829" key="17">
    <source>
        <dbReference type="PDB" id="7PTR"/>
    </source>
</evidence>